<feature type="signal peptide" evidence="1">
    <location>
        <begin position="1"/>
        <end position="28"/>
    </location>
</feature>
<feature type="chain" id="PRO_0000300221" description="UPF0482 protein YnfB">
    <location>
        <begin position="29"/>
        <end position="113"/>
    </location>
</feature>
<comment type="similarity">
    <text evidence="1">Belongs to the UPF0482 family.</text>
</comment>
<proteinExistence type="inferred from homology"/>
<protein>
    <recommendedName>
        <fullName evidence="1">UPF0482 protein YnfB</fullName>
    </recommendedName>
</protein>
<dbReference type="EMBL" id="AE005174">
    <property type="protein sequence ID" value="AAG56570.1"/>
    <property type="molecule type" value="Genomic_DNA"/>
</dbReference>
<dbReference type="EMBL" id="BA000007">
    <property type="protein sequence ID" value="BAB35712.1"/>
    <property type="molecule type" value="Genomic_DNA"/>
</dbReference>
<dbReference type="PIR" id="A99915">
    <property type="entry name" value="A99915"/>
</dbReference>
<dbReference type="PIR" id="F85763">
    <property type="entry name" value="F85763"/>
</dbReference>
<dbReference type="RefSeq" id="NP_310316.1">
    <property type="nucleotide sequence ID" value="NC_002695.1"/>
</dbReference>
<dbReference type="RefSeq" id="WP_000705189.1">
    <property type="nucleotide sequence ID" value="NZ_VOAI01000007.1"/>
</dbReference>
<dbReference type="STRING" id="155864.Z2570"/>
<dbReference type="GeneID" id="913979"/>
<dbReference type="KEGG" id="ece:Z2570"/>
<dbReference type="KEGG" id="ecs:ECs_2289"/>
<dbReference type="PATRIC" id="fig|386585.9.peg.2397"/>
<dbReference type="eggNOG" id="ENOG5032SRB">
    <property type="taxonomic scope" value="Bacteria"/>
</dbReference>
<dbReference type="HOGENOM" id="CLU_167574_0_0_6"/>
<dbReference type="OMA" id="EPNTERC"/>
<dbReference type="Proteomes" id="UP000000558">
    <property type="component" value="Chromosome"/>
</dbReference>
<dbReference type="Proteomes" id="UP000002519">
    <property type="component" value="Chromosome"/>
</dbReference>
<dbReference type="HAMAP" id="MF_01581">
    <property type="entry name" value="UPF0482"/>
    <property type="match status" value="1"/>
</dbReference>
<dbReference type="InterPro" id="IPR009700">
    <property type="entry name" value="DUF1283"/>
</dbReference>
<dbReference type="NCBIfam" id="NF010180">
    <property type="entry name" value="PRK13659.1"/>
    <property type="match status" value="1"/>
</dbReference>
<dbReference type="Pfam" id="PF06932">
    <property type="entry name" value="DUF1283"/>
    <property type="match status" value="1"/>
</dbReference>
<name>YNFB_ECO57</name>
<keyword id="KW-1185">Reference proteome</keyword>
<keyword id="KW-0732">Signal</keyword>
<sequence length="113" mass="12902">MKITLSKRIDLLAFLLPCALALSTTVHAETNKLVIESGDSAQSRQHAAMEKEQWNDTGNLRQKVNKRTEKEWDKADAAFDNRDKCEQSANINAYWEPNTLRCLDRRTGRVITP</sequence>
<evidence type="ECO:0000255" key="1">
    <source>
        <dbReference type="HAMAP-Rule" id="MF_01581"/>
    </source>
</evidence>
<organism>
    <name type="scientific">Escherichia coli O157:H7</name>
    <dbReference type="NCBI Taxonomy" id="83334"/>
    <lineage>
        <taxon>Bacteria</taxon>
        <taxon>Pseudomonadati</taxon>
        <taxon>Pseudomonadota</taxon>
        <taxon>Gammaproteobacteria</taxon>
        <taxon>Enterobacterales</taxon>
        <taxon>Enterobacteriaceae</taxon>
        <taxon>Escherichia</taxon>
    </lineage>
</organism>
<accession>Q8X7A0</accession>
<accession>Q7ADN6</accession>
<reference key="1">
    <citation type="journal article" date="2001" name="Nature">
        <title>Genome sequence of enterohaemorrhagic Escherichia coli O157:H7.</title>
        <authorList>
            <person name="Perna N.T."/>
            <person name="Plunkett G. III"/>
            <person name="Burland V."/>
            <person name="Mau B."/>
            <person name="Glasner J.D."/>
            <person name="Rose D.J."/>
            <person name="Mayhew G.F."/>
            <person name="Evans P.S."/>
            <person name="Gregor J."/>
            <person name="Kirkpatrick H.A."/>
            <person name="Posfai G."/>
            <person name="Hackett J."/>
            <person name="Klink S."/>
            <person name="Boutin A."/>
            <person name="Shao Y."/>
            <person name="Miller L."/>
            <person name="Grotbeck E.J."/>
            <person name="Davis N.W."/>
            <person name="Lim A."/>
            <person name="Dimalanta E.T."/>
            <person name="Potamousis K."/>
            <person name="Apodaca J."/>
            <person name="Anantharaman T.S."/>
            <person name="Lin J."/>
            <person name="Yen G."/>
            <person name="Schwartz D.C."/>
            <person name="Welch R.A."/>
            <person name="Blattner F.R."/>
        </authorList>
    </citation>
    <scope>NUCLEOTIDE SEQUENCE [LARGE SCALE GENOMIC DNA]</scope>
    <source>
        <strain>O157:H7 / EDL933 / ATCC 700927 / EHEC</strain>
    </source>
</reference>
<reference key="2">
    <citation type="journal article" date="2001" name="DNA Res.">
        <title>Complete genome sequence of enterohemorrhagic Escherichia coli O157:H7 and genomic comparison with a laboratory strain K-12.</title>
        <authorList>
            <person name="Hayashi T."/>
            <person name="Makino K."/>
            <person name="Ohnishi M."/>
            <person name="Kurokawa K."/>
            <person name="Ishii K."/>
            <person name="Yokoyama K."/>
            <person name="Han C.-G."/>
            <person name="Ohtsubo E."/>
            <person name="Nakayama K."/>
            <person name="Murata T."/>
            <person name="Tanaka M."/>
            <person name="Tobe T."/>
            <person name="Iida T."/>
            <person name="Takami H."/>
            <person name="Honda T."/>
            <person name="Sasakawa C."/>
            <person name="Ogasawara N."/>
            <person name="Yasunaga T."/>
            <person name="Kuhara S."/>
            <person name="Shiba T."/>
            <person name="Hattori M."/>
            <person name="Shinagawa H."/>
        </authorList>
    </citation>
    <scope>NUCLEOTIDE SEQUENCE [LARGE SCALE GENOMIC DNA]</scope>
    <source>
        <strain>O157:H7 / Sakai / RIMD 0509952 / EHEC</strain>
    </source>
</reference>
<gene>
    <name evidence="1" type="primary">ynfB</name>
    <name type="ordered locus">Z2570</name>
    <name type="ordered locus">ECs2289</name>
</gene>